<protein>
    <recommendedName>
        <fullName evidence="1">Putative phosphoesterase BCE33L1122</fullName>
        <ecNumber evidence="1">3.1.-.-</ecNumber>
    </recommendedName>
</protein>
<feature type="chain" id="PRO_0000299327" description="Putative phosphoesterase BCE33L1122">
    <location>
        <begin position="1"/>
        <end position="172"/>
    </location>
</feature>
<feature type="short sequence motif" description="HXTX 1" evidence="1">
    <location>
        <begin position="34"/>
        <end position="37"/>
    </location>
</feature>
<feature type="short sequence motif" description="HXTX 2" evidence="1">
    <location>
        <begin position="115"/>
        <end position="118"/>
    </location>
</feature>
<feature type="active site" description="Proton donor" evidence="1">
    <location>
        <position position="34"/>
    </location>
</feature>
<feature type="active site" description="Proton acceptor" evidence="1">
    <location>
        <position position="115"/>
    </location>
</feature>
<reference key="1">
    <citation type="journal article" date="2006" name="J. Bacteriol.">
        <title>Pathogenomic sequence analysis of Bacillus cereus and Bacillus thuringiensis isolates closely related to Bacillus anthracis.</title>
        <authorList>
            <person name="Han C.S."/>
            <person name="Xie G."/>
            <person name="Challacombe J.F."/>
            <person name="Altherr M.R."/>
            <person name="Bhotika S.S."/>
            <person name="Bruce D."/>
            <person name="Campbell C.S."/>
            <person name="Campbell M.L."/>
            <person name="Chen J."/>
            <person name="Chertkov O."/>
            <person name="Cleland C."/>
            <person name="Dimitrijevic M."/>
            <person name="Doggett N.A."/>
            <person name="Fawcett J.J."/>
            <person name="Glavina T."/>
            <person name="Goodwin L.A."/>
            <person name="Hill K.K."/>
            <person name="Hitchcock P."/>
            <person name="Jackson P.J."/>
            <person name="Keim P."/>
            <person name="Kewalramani A.R."/>
            <person name="Longmire J."/>
            <person name="Lucas S."/>
            <person name="Malfatti S."/>
            <person name="McMurry K."/>
            <person name="Meincke L.J."/>
            <person name="Misra M."/>
            <person name="Moseman B.L."/>
            <person name="Mundt M."/>
            <person name="Munk A.C."/>
            <person name="Okinaka R.T."/>
            <person name="Parson-Quintana B."/>
            <person name="Reilly L.P."/>
            <person name="Richardson P."/>
            <person name="Robinson D.L."/>
            <person name="Rubin E."/>
            <person name="Saunders E."/>
            <person name="Tapia R."/>
            <person name="Tesmer J.G."/>
            <person name="Thayer N."/>
            <person name="Thompson L.S."/>
            <person name="Tice H."/>
            <person name="Ticknor L.O."/>
            <person name="Wills P.L."/>
            <person name="Brettin T.S."/>
            <person name="Gilna P."/>
        </authorList>
    </citation>
    <scope>NUCLEOTIDE SEQUENCE [LARGE SCALE GENOMIC DNA]</scope>
    <source>
        <strain>ZK / E33L</strain>
    </source>
</reference>
<keyword id="KW-0378">Hydrolase</keyword>
<dbReference type="EC" id="3.1.-.-" evidence="1"/>
<dbReference type="EMBL" id="CP000001">
    <property type="protein sequence ID" value="AAU19125.1"/>
    <property type="molecule type" value="Genomic_DNA"/>
</dbReference>
<dbReference type="RefSeq" id="WP_000765876.1">
    <property type="nucleotide sequence ID" value="NZ_CP009968.1"/>
</dbReference>
<dbReference type="SMR" id="Q63ED9"/>
<dbReference type="KEGG" id="bcz:BCE33L1122"/>
<dbReference type="PATRIC" id="fig|288681.22.peg.4441"/>
<dbReference type="Proteomes" id="UP000002612">
    <property type="component" value="Chromosome"/>
</dbReference>
<dbReference type="GO" id="GO:0016788">
    <property type="term" value="F:hydrolase activity, acting on ester bonds"/>
    <property type="evidence" value="ECO:0007669"/>
    <property type="project" value="UniProtKB-UniRule"/>
</dbReference>
<dbReference type="Gene3D" id="3.90.1140.10">
    <property type="entry name" value="Cyclic phosphodiesterase"/>
    <property type="match status" value="1"/>
</dbReference>
<dbReference type="HAMAP" id="MF_01444">
    <property type="entry name" value="2H_phosphoesterase_YjcG"/>
    <property type="match status" value="1"/>
</dbReference>
<dbReference type="InterPro" id="IPR050580">
    <property type="entry name" value="2H_phosphoesterase_YjcG-like"/>
</dbReference>
<dbReference type="InterPro" id="IPR009097">
    <property type="entry name" value="Cyclic_Pdiesterase"/>
</dbReference>
<dbReference type="InterPro" id="IPR022932">
    <property type="entry name" value="YjcG"/>
</dbReference>
<dbReference type="NCBIfam" id="NF010223">
    <property type="entry name" value="PRK13679.1"/>
    <property type="match status" value="1"/>
</dbReference>
<dbReference type="PANTHER" id="PTHR40037:SF1">
    <property type="entry name" value="PHOSPHOESTERASE SAOUHSC_00951-RELATED"/>
    <property type="match status" value="1"/>
</dbReference>
<dbReference type="PANTHER" id="PTHR40037">
    <property type="entry name" value="PHOSPHOESTERASE YJCG-RELATED"/>
    <property type="match status" value="1"/>
</dbReference>
<dbReference type="Pfam" id="PF13563">
    <property type="entry name" value="2_5_RNA_ligase2"/>
    <property type="match status" value="1"/>
</dbReference>
<dbReference type="SUPFAM" id="SSF55144">
    <property type="entry name" value="LigT-like"/>
    <property type="match status" value="1"/>
</dbReference>
<organism>
    <name type="scientific">Bacillus cereus (strain ZK / E33L)</name>
    <dbReference type="NCBI Taxonomy" id="288681"/>
    <lineage>
        <taxon>Bacteria</taxon>
        <taxon>Bacillati</taxon>
        <taxon>Bacillota</taxon>
        <taxon>Bacilli</taxon>
        <taxon>Bacillales</taxon>
        <taxon>Bacillaceae</taxon>
        <taxon>Bacillus</taxon>
        <taxon>Bacillus cereus group</taxon>
    </lineage>
</organism>
<evidence type="ECO:0000255" key="1">
    <source>
        <dbReference type="HAMAP-Rule" id="MF_01444"/>
    </source>
</evidence>
<accession>Q63ED9</accession>
<sequence>MKLGIVIFPSKMIQDKANGLRKRYDPHYALVPPHITLKTPFETQDEQLESIVNELHTIASKTNPFTLHVGKVGSFAPVNNVIYFKVEKTPELTFLNEEMHSGFFTQEREYAFVPHLTIGQGLSDAEHADVLGRLRMKDFYYEQPIDRFHLLYQLENGTWTVHETFRLGKGNN</sequence>
<name>Y1122_BACCZ</name>
<comment type="similarity">
    <text evidence="1">Belongs to the 2H phosphoesterase superfamily. YjcG family.</text>
</comment>
<gene>
    <name type="ordered locus">BCE33L1122</name>
</gene>
<proteinExistence type="inferred from homology"/>